<gene>
    <name type="primary">LYP1</name>
    <name type="ordered locus">YNL268W</name>
    <name type="ORF">N0790</name>
</gene>
<proteinExistence type="evidence at protein level"/>
<feature type="chain" id="PRO_0000054156" description="Lysine-specific permease">
    <location>
        <begin position="1"/>
        <end position="611"/>
    </location>
</feature>
<feature type="topological domain" description="Cytoplasmic" evidence="1">
    <location>
        <begin position="1"/>
        <end position="115"/>
    </location>
</feature>
<feature type="transmembrane region" description="Helical" evidence="1">
    <location>
        <begin position="116"/>
        <end position="136"/>
    </location>
</feature>
<feature type="topological domain" description="Extracellular" evidence="1">
    <location>
        <begin position="137"/>
        <end position="141"/>
    </location>
</feature>
<feature type="transmembrane region" description="Helical" evidence="1">
    <location>
        <begin position="142"/>
        <end position="162"/>
    </location>
</feature>
<feature type="topological domain" description="Cytoplasmic" evidence="1">
    <location>
        <begin position="163"/>
        <end position="185"/>
    </location>
</feature>
<feature type="transmembrane region" description="Helical" evidence="1">
    <location>
        <begin position="186"/>
        <end position="205"/>
    </location>
</feature>
<feature type="topological domain" description="Extracellular" evidence="1">
    <location>
        <begin position="206"/>
        <end position="223"/>
    </location>
</feature>
<feature type="transmembrane region" description="Helical" evidence="1">
    <location>
        <begin position="224"/>
        <end position="243"/>
    </location>
</feature>
<feature type="topological domain" description="Cytoplasmic" evidence="1">
    <location>
        <begin position="244"/>
        <end position="256"/>
    </location>
</feature>
<feature type="transmembrane region" description="Helical" evidence="1">
    <location>
        <begin position="257"/>
        <end position="274"/>
    </location>
</feature>
<feature type="topological domain" description="Extracellular" evidence="1">
    <location>
        <begin position="275"/>
        <end position="303"/>
    </location>
</feature>
<feature type="transmembrane region" description="Helical" evidence="1">
    <location>
        <begin position="304"/>
        <end position="321"/>
    </location>
</feature>
<feature type="topological domain" description="Cytoplasmic" evidence="1">
    <location>
        <begin position="322"/>
        <end position="344"/>
    </location>
</feature>
<feature type="transmembrane region" description="Helical" evidence="1">
    <location>
        <begin position="345"/>
        <end position="365"/>
    </location>
</feature>
<feature type="topological domain" description="Extracellular" evidence="1">
    <location>
        <begin position="366"/>
        <end position="398"/>
    </location>
</feature>
<feature type="transmembrane region" description="Helical" evidence="1">
    <location>
        <begin position="399"/>
        <end position="418"/>
    </location>
</feature>
<feature type="topological domain" description="Cytoplasmic" evidence="1">
    <location>
        <begin position="419"/>
        <end position="445"/>
    </location>
</feature>
<feature type="transmembrane region" description="Helical" evidence="1">
    <location>
        <begin position="446"/>
        <end position="464"/>
    </location>
</feature>
<feature type="topological domain" description="Extracellular" evidence="1">
    <location>
        <begin position="465"/>
        <end position="473"/>
    </location>
</feature>
<feature type="transmembrane region" description="Helical" evidence="1">
    <location>
        <begin position="474"/>
        <end position="494"/>
    </location>
</feature>
<feature type="topological domain" description="Cytoplasmic" evidence="1">
    <location>
        <begin position="495"/>
        <end position="513"/>
    </location>
</feature>
<feature type="transmembrane region" description="Helical" evidence="1">
    <location>
        <begin position="514"/>
        <end position="532"/>
    </location>
</feature>
<feature type="topological domain" description="Extracellular" evidence="1">
    <location>
        <begin position="533"/>
        <end position="547"/>
    </location>
</feature>
<feature type="transmembrane region" description="Helical" evidence="1">
    <location>
        <begin position="548"/>
        <end position="566"/>
    </location>
</feature>
<feature type="topological domain" description="Cytoplasmic" evidence="1">
    <location>
        <begin position="567"/>
        <end position="611"/>
    </location>
</feature>
<feature type="modified residue" description="Phosphoserine" evidence="7">
    <location>
        <position position="64"/>
    </location>
</feature>
<feature type="modified residue" description="Phosphoserine" evidence="7">
    <location>
        <position position="75"/>
    </location>
</feature>
<feature type="modified residue" description="Phosphothreonine" evidence="7">
    <location>
        <position position="77"/>
    </location>
</feature>
<feature type="modified residue" description="Phosphoserine" evidence="5 7">
    <location>
        <position position="79"/>
    </location>
</feature>
<feature type="modified residue" description="Phosphoserine" evidence="6 7">
    <location>
        <position position="87"/>
    </location>
</feature>
<feature type="modified residue" description="Phosphothreonine" evidence="6 7">
    <location>
        <position position="90"/>
    </location>
</feature>
<feature type="cross-link" description="Glycyl lysine isopeptide (Lys-Gly) (interchain with G-Cter in ubiquitin)" evidence="8">
    <location>
        <position position="54"/>
    </location>
</feature>
<feature type="sequence conflict" description="In Ref. 1; CAA47729." evidence="4" ref="1">
    <original>T</original>
    <variation>P</variation>
    <location>
        <position position="90"/>
    </location>
</feature>
<feature type="sequence conflict" description="In Ref. 1; CAA47729." evidence="4" ref="1">
    <original>N</original>
    <variation>D</variation>
    <location>
        <position position="93"/>
    </location>
</feature>
<feature type="sequence conflict" description="In Ref. 1; CAA47729." evidence="4" ref="1">
    <original>V</original>
    <variation>M</variation>
    <location>
        <position position="561"/>
    </location>
</feature>
<protein>
    <recommendedName>
        <fullName>Lysine-specific permease</fullName>
    </recommendedName>
</protein>
<dbReference type="EMBL" id="X67315">
    <property type="protein sequence ID" value="CAA47729.1"/>
    <property type="molecule type" value="Genomic_DNA"/>
</dbReference>
<dbReference type="EMBL" id="X92494">
    <property type="protein sequence ID" value="CAA63230.1"/>
    <property type="molecule type" value="Genomic_DNA"/>
</dbReference>
<dbReference type="EMBL" id="Z71544">
    <property type="protein sequence ID" value="CAA96175.1"/>
    <property type="molecule type" value="Genomic_DNA"/>
</dbReference>
<dbReference type="EMBL" id="BK006947">
    <property type="protein sequence ID" value="DAA10292.1"/>
    <property type="molecule type" value="Genomic_DNA"/>
</dbReference>
<dbReference type="PIR" id="S60914">
    <property type="entry name" value="S60914"/>
</dbReference>
<dbReference type="RefSeq" id="NP_014131.1">
    <property type="nucleotide sequence ID" value="NM_001183106.1"/>
</dbReference>
<dbReference type="SMR" id="P32487"/>
<dbReference type="BioGRID" id="35572">
    <property type="interactions" value="43"/>
</dbReference>
<dbReference type="FunCoup" id="P32487">
    <property type="interactions" value="172"/>
</dbReference>
<dbReference type="IntAct" id="P32487">
    <property type="interactions" value="4"/>
</dbReference>
<dbReference type="MINT" id="P32487"/>
<dbReference type="STRING" id="4932.YNL268W"/>
<dbReference type="TCDB" id="2.A.3.10.10">
    <property type="family name" value="the amino acid-polyamine-organocation (apc) family"/>
</dbReference>
<dbReference type="iPTMnet" id="P32487"/>
<dbReference type="PaxDb" id="4932-YNL268W"/>
<dbReference type="PeptideAtlas" id="P32487"/>
<dbReference type="EnsemblFungi" id="YNL268W_mRNA">
    <property type="protein sequence ID" value="YNL268W"/>
    <property type="gene ID" value="YNL268W"/>
</dbReference>
<dbReference type="GeneID" id="855453"/>
<dbReference type="KEGG" id="sce:YNL268W"/>
<dbReference type="AGR" id="SGD:S000005212"/>
<dbReference type="SGD" id="S000005212">
    <property type="gene designation" value="LYP1"/>
</dbReference>
<dbReference type="VEuPathDB" id="FungiDB:YNL268W"/>
<dbReference type="eggNOG" id="KOG1286">
    <property type="taxonomic scope" value="Eukaryota"/>
</dbReference>
<dbReference type="HOGENOM" id="CLU_007946_12_1_1"/>
<dbReference type="InParanoid" id="P32487"/>
<dbReference type="OMA" id="LFKALWY"/>
<dbReference type="OrthoDB" id="3900342at2759"/>
<dbReference type="BioCyc" id="YEAST:G3O-33262-MONOMER"/>
<dbReference type="BioGRID-ORCS" id="855453">
    <property type="hits" value="0 hits in 10 CRISPR screens"/>
</dbReference>
<dbReference type="PRO" id="PR:P32487"/>
<dbReference type="Proteomes" id="UP000002311">
    <property type="component" value="Chromosome XIV"/>
</dbReference>
<dbReference type="RNAct" id="P32487">
    <property type="molecule type" value="protein"/>
</dbReference>
<dbReference type="GO" id="GO:0032126">
    <property type="term" value="C:eisosome"/>
    <property type="evidence" value="ECO:0000314"/>
    <property type="project" value="SGD"/>
</dbReference>
<dbReference type="GO" id="GO:0016020">
    <property type="term" value="C:membrane"/>
    <property type="evidence" value="ECO:0000318"/>
    <property type="project" value="GO_Central"/>
</dbReference>
<dbReference type="GO" id="GO:0005739">
    <property type="term" value="C:mitochondrion"/>
    <property type="evidence" value="ECO:0007005"/>
    <property type="project" value="SGD"/>
</dbReference>
<dbReference type="GO" id="GO:0015171">
    <property type="term" value="F:amino acid transmembrane transporter activity"/>
    <property type="evidence" value="ECO:0000318"/>
    <property type="project" value="GO_Central"/>
</dbReference>
<dbReference type="GO" id="GO:0015174">
    <property type="term" value="F:basic amino acid transmembrane transporter activity"/>
    <property type="evidence" value="ECO:0000314"/>
    <property type="project" value="SGD"/>
</dbReference>
<dbReference type="GO" id="GO:0003333">
    <property type="term" value="P:amino acid transmembrane transport"/>
    <property type="evidence" value="ECO:0000318"/>
    <property type="project" value="GO_Central"/>
</dbReference>
<dbReference type="GO" id="GO:0015802">
    <property type="term" value="P:basic amino acid transport"/>
    <property type="evidence" value="ECO:0000314"/>
    <property type="project" value="SGD"/>
</dbReference>
<dbReference type="FunFam" id="1.20.1740.10:FF:000006">
    <property type="entry name" value="General amino acid permease"/>
    <property type="match status" value="1"/>
</dbReference>
<dbReference type="Gene3D" id="1.20.1740.10">
    <property type="entry name" value="Amino acid/polyamine transporter I"/>
    <property type="match status" value="1"/>
</dbReference>
<dbReference type="InterPro" id="IPR004841">
    <property type="entry name" value="AA-permease/SLC12A_dom"/>
</dbReference>
<dbReference type="InterPro" id="IPR004840">
    <property type="entry name" value="Amino_acid_permease_CS"/>
</dbReference>
<dbReference type="InterPro" id="IPR004762">
    <property type="entry name" value="Amino_acid_permease_fungi"/>
</dbReference>
<dbReference type="InterPro" id="IPR050524">
    <property type="entry name" value="APC_YAT"/>
</dbReference>
<dbReference type="NCBIfam" id="TIGR00913">
    <property type="entry name" value="2A0310"/>
    <property type="match status" value="1"/>
</dbReference>
<dbReference type="PANTHER" id="PTHR43341">
    <property type="entry name" value="AMINO ACID PERMEASE"/>
    <property type="match status" value="1"/>
</dbReference>
<dbReference type="PANTHER" id="PTHR43341:SF19">
    <property type="entry name" value="LYSINE-SPECIFIC PERMEASE"/>
    <property type="match status" value="1"/>
</dbReference>
<dbReference type="Pfam" id="PF00324">
    <property type="entry name" value="AA_permease"/>
    <property type="match status" value="1"/>
</dbReference>
<dbReference type="PROSITE" id="PS00218">
    <property type="entry name" value="AMINO_ACID_PERMEASE_1"/>
    <property type="match status" value="1"/>
</dbReference>
<organism>
    <name type="scientific">Saccharomyces cerevisiae (strain ATCC 204508 / S288c)</name>
    <name type="common">Baker's yeast</name>
    <dbReference type="NCBI Taxonomy" id="559292"/>
    <lineage>
        <taxon>Eukaryota</taxon>
        <taxon>Fungi</taxon>
        <taxon>Dikarya</taxon>
        <taxon>Ascomycota</taxon>
        <taxon>Saccharomycotina</taxon>
        <taxon>Saccharomycetes</taxon>
        <taxon>Saccharomycetales</taxon>
        <taxon>Saccharomycetaceae</taxon>
        <taxon>Saccharomyces</taxon>
    </lineage>
</organism>
<sequence length="611" mass="68090">MGRFSNIITSNKWDEKQNNIGEQSMQELPEDQIEHEMEAIDPSNKTTPYSIDEKQYNTKKKHGSLQGGAIADVNSITNSLTRLQVVSHETDINEDEEEAHYEDKHVKRALKQRHIGMIALGGTIGTGLFVGISTPLSNAGPVGSLIAYIFMGTIVYFVTQSLGEMATFIPVTSSITVFSKRFLSPAFGVSNGYMYWFNWAITYAVEVSVIGQVIEYWTDKVPLAAWIAIFWVIITLMNFFPVKVYGEFEFWVASVKVLAIMGYLIYALIIVCGGSHQGPIGFRYWRNPGAWGPGIISSDKSEGRFLGWVSSLINAAFTYQGTELVGITAGEAANPRKTVPRAINKVVFRIVLFYIMSLFFIGLLVPYNDSRLSASSAVIASSPFVISIQNAGTYALPDIFNAVVLITVVSAANSNVYVGSRVLYSLARTGNAPKQFGYVTRQGVPYLGVVCTAALGLLAFLVVNNNANTAFNWLINISTLAGLCAWLFISLAHIRFMQALKHRGISRDDLPFKAKLMPYGAYYAAFFVTVIIFIQGFQAFCPFKVSEFFTSYISLILLAVVFIGCQIYYKCRFIWKLEDIDIDSDRREIEAIIWEDDEPKNLWEKFWAAVA</sequence>
<name>LYP1_YEAST</name>
<accession>P32487</accession>
<accession>D6W0S6</accession>
<keyword id="KW-0029">Amino-acid transport</keyword>
<keyword id="KW-1017">Isopeptide bond</keyword>
<keyword id="KW-0472">Membrane</keyword>
<keyword id="KW-0597">Phosphoprotein</keyword>
<keyword id="KW-1185">Reference proteome</keyword>
<keyword id="KW-0812">Transmembrane</keyword>
<keyword id="KW-1133">Transmembrane helix</keyword>
<keyword id="KW-0813">Transport</keyword>
<keyword id="KW-0832">Ubl conjugation</keyword>
<reference key="1">
    <citation type="journal article" date="1993" name="Yeast">
        <title>Cloning and sequencing of the Saccharomyces cerevisiae gene LYP1 coding for a lysine-specific permease.</title>
        <authorList>
            <person name="Sychrova H."/>
            <person name="Chevallier M.R."/>
        </authorList>
    </citation>
    <scope>NUCLEOTIDE SEQUENCE [GENOMIC DNA]</scope>
    <source>
        <strain>ATCC 28383 / FL100 / VTT C-80102</strain>
    </source>
</reference>
<reference key="2">
    <citation type="journal article" date="1996" name="Yeast">
        <title>The sequence of a 24,152 bp segment from the left arm of chromosome XIV from Saccharomyces cerevisiae between the BNI1 and the POL2 genes.</title>
        <authorList>
            <person name="Sen-Gupta M."/>
            <person name="Lyck R."/>
            <person name="Fleig U."/>
            <person name="Niedenthal R.K."/>
            <person name="Hegemann J.H."/>
        </authorList>
    </citation>
    <scope>NUCLEOTIDE SEQUENCE [GENOMIC DNA]</scope>
    <source>
        <strain>ATCC 96604 / S288c / FY1679</strain>
    </source>
</reference>
<reference key="3">
    <citation type="journal article" date="1997" name="Nature">
        <title>The nucleotide sequence of Saccharomyces cerevisiae chromosome XIV and its evolutionary implications.</title>
        <authorList>
            <person name="Philippsen P."/>
            <person name="Kleine K."/>
            <person name="Poehlmann R."/>
            <person name="Duesterhoeft A."/>
            <person name="Hamberg K."/>
            <person name="Hegemann J.H."/>
            <person name="Obermaier B."/>
            <person name="Urrestarazu L.A."/>
            <person name="Aert R."/>
            <person name="Albermann K."/>
            <person name="Altmann R."/>
            <person name="Andre B."/>
            <person name="Baladron V."/>
            <person name="Ballesta J.P.G."/>
            <person name="Becam A.-M."/>
            <person name="Beinhauer J.D."/>
            <person name="Boskovic J."/>
            <person name="Buitrago M.J."/>
            <person name="Bussereau F."/>
            <person name="Coster F."/>
            <person name="Crouzet M."/>
            <person name="D'Angelo M."/>
            <person name="Dal Pero F."/>
            <person name="De Antoni A."/>
            <person name="del Rey F."/>
            <person name="Doignon F."/>
            <person name="Domdey H."/>
            <person name="Dubois E."/>
            <person name="Fiedler T.A."/>
            <person name="Fleig U."/>
            <person name="Floeth M."/>
            <person name="Fritz C."/>
            <person name="Gaillardin C."/>
            <person name="Garcia-Cantalejo J.M."/>
            <person name="Glansdorff N."/>
            <person name="Goffeau A."/>
            <person name="Gueldener U."/>
            <person name="Herbert C.J."/>
            <person name="Heumann K."/>
            <person name="Heuss-Neitzel D."/>
            <person name="Hilbert H."/>
            <person name="Hinni K."/>
            <person name="Iraqui Houssaini I."/>
            <person name="Jacquet M."/>
            <person name="Jimenez A."/>
            <person name="Jonniaux J.-L."/>
            <person name="Karpfinger-Hartl L."/>
            <person name="Lanfranchi G."/>
            <person name="Lepingle A."/>
            <person name="Levesque H."/>
            <person name="Lyck R."/>
            <person name="Maftahi M."/>
            <person name="Mallet L."/>
            <person name="Maurer C.T.C."/>
            <person name="Messenguy F."/>
            <person name="Mewes H.-W."/>
            <person name="Moestl D."/>
            <person name="Nasr F."/>
            <person name="Nicaud J.-M."/>
            <person name="Niedenthal R.K."/>
            <person name="Pandolfo D."/>
            <person name="Pierard A."/>
            <person name="Piravandi E."/>
            <person name="Planta R.J."/>
            <person name="Pohl T.M."/>
            <person name="Purnelle B."/>
            <person name="Rebischung C."/>
            <person name="Remacha M.A."/>
            <person name="Revuelta J.L."/>
            <person name="Rinke M."/>
            <person name="Saiz J.E."/>
            <person name="Sartorello F."/>
            <person name="Scherens B."/>
            <person name="Sen-Gupta M."/>
            <person name="Soler-Mira A."/>
            <person name="Urbanus J.H.M."/>
            <person name="Valle G."/>
            <person name="Van Dyck L."/>
            <person name="Verhasselt P."/>
            <person name="Vierendeels F."/>
            <person name="Vissers S."/>
            <person name="Voet M."/>
            <person name="Volckaert G."/>
            <person name="Wach A."/>
            <person name="Wambutt R."/>
            <person name="Wedler H."/>
            <person name="Zollner A."/>
            <person name="Hani J."/>
        </authorList>
    </citation>
    <scope>NUCLEOTIDE SEQUENCE [LARGE SCALE GENOMIC DNA]</scope>
    <source>
        <strain>ATCC 204508 / S288c</strain>
    </source>
</reference>
<reference key="4">
    <citation type="journal article" date="2014" name="G3 (Bethesda)">
        <title>The reference genome sequence of Saccharomyces cerevisiae: Then and now.</title>
        <authorList>
            <person name="Engel S.R."/>
            <person name="Dietrich F.S."/>
            <person name="Fisk D.G."/>
            <person name="Binkley G."/>
            <person name="Balakrishnan R."/>
            <person name="Costanzo M.C."/>
            <person name="Dwight S.S."/>
            <person name="Hitz B.C."/>
            <person name="Karra K."/>
            <person name="Nash R.S."/>
            <person name="Weng S."/>
            <person name="Wong E.D."/>
            <person name="Lloyd P."/>
            <person name="Skrzypek M.S."/>
            <person name="Miyasato S.R."/>
            <person name="Simison M."/>
            <person name="Cherry J.M."/>
        </authorList>
    </citation>
    <scope>GENOME REANNOTATION</scope>
    <source>
        <strain>ATCC 204508 / S288c</strain>
    </source>
</reference>
<reference key="5">
    <citation type="journal article" date="1999" name="Curr. Genet.">
        <title>Substrate specificity and gene expression of the amino-acid permeases in Saccharomyces cerevisiae.</title>
        <authorList>
            <person name="Regenberg B."/>
            <person name="During-Olsen L."/>
            <person name="Kielland-Brandt M.C."/>
            <person name="Holmberg S."/>
        </authorList>
    </citation>
    <scope>FUNCTION</scope>
</reference>
<reference key="6">
    <citation type="journal article" date="2003" name="Nature">
        <title>Global analysis of protein expression in yeast.</title>
        <authorList>
            <person name="Ghaemmaghami S."/>
            <person name="Huh W.-K."/>
            <person name="Bower K."/>
            <person name="Howson R.W."/>
            <person name="Belle A."/>
            <person name="Dephoure N."/>
            <person name="O'Shea E.K."/>
            <person name="Weissman J.S."/>
        </authorList>
    </citation>
    <scope>LEVEL OF PROTEIN EXPRESSION [LARGE SCALE ANALYSIS]</scope>
</reference>
<reference key="7">
    <citation type="journal article" date="2005" name="Mol. Cell. Proteomics">
        <title>Quantitative phosphoproteomics applied to the yeast pheromone signaling pathway.</title>
        <authorList>
            <person name="Gruhler A."/>
            <person name="Olsen J.V."/>
            <person name="Mohammed S."/>
            <person name="Mortensen P."/>
            <person name="Faergeman N.J."/>
            <person name="Mann M."/>
            <person name="Jensen O.N."/>
        </authorList>
    </citation>
    <scope>PHOSPHORYLATION [LARGE SCALE ANALYSIS] AT SER-79</scope>
    <scope>IDENTIFICATION BY MASS SPECTROMETRY [LARGE SCALE ANALYSIS]</scope>
    <source>
        <strain>YAL6B</strain>
    </source>
</reference>
<reference key="8">
    <citation type="journal article" date="2006" name="Proc. Natl. Acad. Sci. U.S.A.">
        <title>A global topology map of the Saccharomyces cerevisiae membrane proteome.</title>
        <authorList>
            <person name="Kim H."/>
            <person name="Melen K."/>
            <person name="Oesterberg M."/>
            <person name="von Heijne G."/>
        </authorList>
    </citation>
    <scope>TOPOLOGY [LARGE SCALE ANALYSIS]</scope>
    <source>
        <strain>ATCC 208353 / W303-1A</strain>
    </source>
</reference>
<reference key="9">
    <citation type="journal article" date="2008" name="Mol. Cell. Proteomics">
        <title>A multidimensional chromatography technology for in-depth phosphoproteome analysis.</title>
        <authorList>
            <person name="Albuquerque C.P."/>
            <person name="Smolka M.B."/>
            <person name="Payne S.H."/>
            <person name="Bafna V."/>
            <person name="Eng J."/>
            <person name="Zhou H."/>
        </authorList>
    </citation>
    <scope>PHOSPHORYLATION [LARGE SCALE ANALYSIS] AT SER-87 AND THR-90</scope>
    <scope>IDENTIFICATION BY MASS SPECTROMETRY [LARGE SCALE ANALYSIS]</scope>
</reference>
<reference key="10">
    <citation type="journal article" date="2009" name="Science">
        <title>Global analysis of Cdk1 substrate phosphorylation sites provides insights into evolution.</title>
        <authorList>
            <person name="Holt L.J."/>
            <person name="Tuch B.B."/>
            <person name="Villen J."/>
            <person name="Johnson A.D."/>
            <person name="Gygi S.P."/>
            <person name="Morgan D.O."/>
        </authorList>
    </citation>
    <scope>PHOSPHORYLATION [LARGE SCALE ANALYSIS] AT SER-64; SER-75; THR-77; SER-79; SER-87 AND THR-90</scope>
    <scope>IDENTIFICATION BY MASS SPECTROMETRY [LARGE SCALE ANALYSIS]</scope>
</reference>
<reference key="11">
    <citation type="journal article" date="2012" name="Proteomics">
        <title>Sites of ubiquitin attachment in Saccharomyces cerevisiae.</title>
        <authorList>
            <person name="Starita L.M."/>
            <person name="Lo R.S."/>
            <person name="Eng J.K."/>
            <person name="von Haller P.D."/>
            <person name="Fields S."/>
        </authorList>
    </citation>
    <scope>UBIQUITINATION [LARGE SCALE ANALYSIS] AT LYS-54</scope>
    <scope>IDENTIFICATION BY MASS SPECTROMETRY [LARGE SCALE ANALYSIS]</scope>
</reference>
<evidence type="ECO:0000255" key="1"/>
<evidence type="ECO:0000269" key="2">
    <source>
    </source>
</evidence>
<evidence type="ECO:0000269" key="3">
    <source>
    </source>
</evidence>
<evidence type="ECO:0000305" key="4"/>
<evidence type="ECO:0007744" key="5">
    <source>
    </source>
</evidence>
<evidence type="ECO:0007744" key="6">
    <source>
    </source>
</evidence>
<evidence type="ECO:0007744" key="7">
    <source>
    </source>
</evidence>
<evidence type="ECO:0007744" key="8">
    <source>
    </source>
</evidence>
<comment type="function">
    <text evidence="2">High-affinity permease for lysine.</text>
</comment>
<comment type="subcellular location">
    <subcellularLocation>
        <location>Membrane</location>
        <topology>Multi-pass membrane protein</topology>
    </subcellularLocation>
</comment>
<comment type="miscellaneous">
    <text evidence="3">Present with 2580 molecules/cell in log phase SD medium.</text>
</comment>
<comment type="similarity">
    <text evidence="4">Belongs to the amino acid-polyamine-organocation (APC) superfamily. YAT (TC 2.A.3.10) family.</text>
</comment>